<reference key="1">
    <citation type="journal article" date="2006" name="J. Bacteriol.">
        <title>The genome of the obligately intracellular bacterium Ehrlichia canis reveals themes of complex membrane structure and immune evasion strategies.</title>
        <authorList>
            <person name="Mavromatis K."/>
            <person name="Doyle C.K."/>
            <person name="Lykidis A."/>
            <person name="Ivanova N."/>
            <person name="Francino M.P."/>
            <person name="Chain P."/>
            <person name="Shin M."/>
            <person name="Malfatti S."/>
            <person name="Larimer F."/>
            <person name="Copeland A."/>
            <person name="Detter J.C."/>
            <person name="Land M."/>
            <person name="Richardson P.M."/>
            <person name="Yu X.J."/>
            <person name="Walker D.H."/>
            <person name="McBride J.W."/>
            <person name="Kyrpides N.C."/>
        </authorList>
    </citation>
    <scope>NUCLEOTIDE SEQUENCE [LARGE SCALE GENOMIC DNA]</scope>
    <source>
        <strain>Jake</strain>
    </source>
</reference>
<dbReference type="EMBL" id="CP000107">
    <property type="protein sequence ID" value="AAZ68682.1"/>
    <property type="molecule type" value="Genomic_DNA"/>
</dbReference>
<dbReference type="RefSeq" id="WP_011304759.1">
    <property type="nucleotide sequence ID" value="NC_007354.1"/>
</dbReference>
<dbReference type="SMR" id="Q3YRH3"/>
<dbReference type="FunCoup" id="Q3YRH3">
    <property type="interactions" value="316"/>
</dbReference>
<dbReference type="STRING" id="269484.Ecaj_0648"/>
<dbReference type="KEGG" id="ecn:Ecaj_0648"/>
<dbReference type="eggNOG" id="COG0234">
    <property type="taxonomic scope" value="Bacteria"/>
</dbReference>
<dbReference type="HOGENOM" id="CLU_132825_1_0_5"/>
<dbReference type="InParanoid" id="Q3YRH3"/>
<dbReference type="Proteomes" id="UP000000435">
    <property type="component" value="Chromosome"/>
</dbReference>
<dbReference type="GO" id="GO:0005737">
    <property type="term" value="C:cytoplasm"/>
    <property type="evidence" value="ECO:0007669"/>
    <property type="project" value="UniProtKB-SubCell"/>
</dbReference>
<dbReference type="GO" id="GO:0005524">
    <property type="term" value="F:ATP binding"/>
    <property type="evidence" value="ECO:0007669"/>
    <property type="project" value="InterPro"/>
</dbReference>
<dbReference type="GO" id="GO:0046872">
    <property type="term" value="F:metal ion binding"/>
    <property type="evidence" value="ECO:0007669"/>
    <property type="project" value="TreeGrafter"/>
</dbReference>
<dbReference type="GO" id="GO:0044183">
    <property type="term" value="F:protein folding chaperone"/>
    <property type="evidence" value="ECO:0007669"/>
    <property type="project" value="InterPro"/>
</dbReference>
<dbReference type="GO" id="GO:0051087">
    <property type="term" value="F:protein-folding chaperone binding"/>
    <property type="evidence" value="ECO:0007669"/>
    <property type="project" value="TreeGrafter"/>
</dbReference>
<dbReference type="GO" id="GO:0051082">
    <property type="term" value="F:unfolded protein binding"/>
    <property type="evidence" value="ECO:0007669"/>
    <property type="project" value="TreeGrafter"/>
</dbReference>
<dbReference type="GO" id="GO:0051085">
    <property type="term" value="P:chaperone cofactor-dependent protein refolding"/>
    <property type="evidence" value="ECO:0007669"/>
    <property type="project" value="TreeGrafter"/>
</dbReference>
<dbReference type="CDD" id="cd00320">
    <property type="entry name" value="cpn10"/>
    <property type="match status" value="1"/>
</dbReference>
<dbReference type="FunFam" id="2.30.33.40:FF:000001">
    <property type="entry name" value="10 kDa chaperonin"/>
    <property type="match status" value="1"/>
</dbReference>
<dbReference type="Gene3D" id="2.30.33.40">
    <property type="entry name" value="GroES chaperonin"/>
    <property type="match status" value="1"/>
</dbReference>
<dbReference type="HAMAP" id="MF_00580">
    <property type="entry name" value="CH10"/>
    <property type="match status" value="1"/>
</dbReference>
<dbReference type="InterPro" id="IPR020818">
    <property type="entry name" value="Chaperonin_GroES"/>
</dbReference>
<dbReference type="InterPro" id="IPR037124">
    <property type="entry name" value="Chaperonin_GroES_sf"/>
</dbReference>
<dbReference type="InterPro" id="IPR011032">
    <property type="entry name" value="GroES-like_sf"/>
</dbReference>
<dbReference type="NCBIfam" id="NF001533">
    <property type="entry name" value="PRK00364.2-4"/>
    <property type="match status" value="1"/>
</dbReference>
<dbReference type="PANTHER" id="PTHR10772">
    <property type="entry name" value="10 KDA HEAT SHOCK PROTEIN"/>
    <property type="match status" value="1"/>
</dbReference>
<dbReference type="PANTHER" id="PTHR10772:SF63">
    <property type="entry name" value="20 KDA CHAPERONIN, CHLOROPLASTIC"/>
    <property type="match status" value="1"/>
</dbReference>
<dbReference type="Pfam" id="PF00166">
    <property type="entry name" value="Cpn10"/>
    <property type="match status" value="1"/>
</dbReference>
<dbReference type="PRINTS" id="PR00297">
    <property type="entry name" value="CHAPERONIN10"/>
</dbReference>
<dbReference type="SMART" id="SM00883">
    <property type="entry name" value="Cpn10"/>
    <property type="match status" value="1"/>
</dbReference>
<dbReference type="SUPFAM" id="SSF50129">
    <property type="entry name" value="GroES-like"/>
    <property type="match status" value="1"/>
</dbReference>
<sequence length="94" mass="10390">MNLSMLHDNVLIEALEEGNSNSPIQLPDSAKKKPTKGKVVAVGPGVYNSNGNILPMNIKVGEVVFYRQWAGNEIEFNDKKYIVMKESDIIAKEA</sequence>
<keyword id="KW-0143">Chaperone</keyword>
<keyword id="KW-0963">Cytoplasm</keyword>
<accession>Q3YRH3</accession>
<comment type="function">
    <text evidence="1">Together with the chaperonin GroEL, plays an essential role in assisting protein folding. The GroEL-GroES system forms a nano-cage that allows encapsulation of the non-native substrate proteins and provides a physical environment optimized to promote and accelerate protein folding. GroES binds to the apical surface of the GroEL ring, thereby capping the opening of the GroEL channel.</text>
</comment>
<comment type="subunit">
    <text evidence="1">Heptamer of 7 subunits arranged in a ring. Interacts with the chaperonin GroEL.</text>
</comment>
<comment type="subcellular location">
    <subcellularLocation>
        <location evidence="1">Cytoplasm</location>
    </subcellularLocation>
</comment>
<comment type="similarity">
    <text evidence="1">Belongs to the GroES chaperonin family.</text>
</comment>
<proteinExistence type="inferred from homology"/>
<protein>
    <recommendedName>
        <fullName evidence="1">Co-chaperonin GroES</fullName>
    </recommendedName>
    <alternativeName>
        <fullName evidence="1">10 kDa chaperonin</fullName>
    </alternativeName>
    <alternativeName>
        <fullName evidence="1">Chaperonin-10</fullName>
        <shortName evidence="1">Cpn10</shortName>
    </alternativeName>
</protein>
<name>CH10_EHRCJ</name>
<feature type="chain" id="PRO_1000025255" description="Co-chaperonin GroES">
    <location>
        <begin position="1"/>
        <end position="94"/>
    </location>
</feature>
<gene>
    <name evidence="1" type="primary">groES</name>
    <name evidence="1" type="synonym">groS</name>
    <name type="ordered locus">Ecaj_0648</name>
</gene>
<evidence type="ECO:0000255" key="1">
    <source>
        <dbReference type="HAMAP-Rule" id="MF_00580"/>
    </source>
</evidence>
<organism>
    <name type="scientific">Ehrlichia canis (strain Jake)</name>
    <dbReference type="NCBI Taxonomy" id="269484"/>
    <lineage>
        <taxon>Bacteria</taxon>
        <taxon>Pseudomonadati</taxon>
        <taxon>Pseudomonadota</taxon>
        <taxon>Alphaproteobacteria</taxon>
        <taxon>Rickettsiales</taxon>
        <taxon>Anaplasmataceae</taxon>
        <taxon>Ehrlichia</taxon>
    </lineage>
</organism>